<evidence type="ECO:0000255" key="1">
    <source>
        <dbReference type="HAMAP-Rule" id="MF_01722"/>
    </source>
</evidence>
<organism>
    <name type="scientific">Burkholderia ambifaria (strain ATCC BAA-244 / DSM 16087 / CCUG 44356 / LMG 19182 / AMMD)</name>
    <name type="common">Burkholderia cepacia (strain AMMD)</name>
    <dbReference type="NCBI Taxonomy" id="339670"/>
    <lineage>
        <taxon>Bacteria</taxon>
        <taxon>Pseudomonadati</taxon>
        <taxon>Pseudomonadota</taxon>
        <taxon>Betaproteobacteria</taxon>
        <taxon>Burkholderiales</taxon>
        <taxon>Burkholderiaceae</taxon>
        <taxon>Burkholderia</taxon>
        <taxon>Burkholderia cepacia complex</taxon>
    </lineage>
</organism>
<feature type="chain" id="PRO_0000277675" description="Xylose import ATP-binding protein XylG">
    <location>
        <begin position="1"/>
        <end position="519"/>
    </location>
</feature>
<feature type="domain" description="ABC transporter 1" evidence="1">
    <location>
        <begin position="6"/>
        <end position="245"/>
    </location>
</feature>
<feature type="domain" description="ABC transporter 2" evidence="1">
    <location>
        <begin position="262"/>
        <end position="507"/>
    </location>
</feature>
<feature type="binding site" evidence="1">
    <location>
        <begin position="38"/>
        <end position="45"/>
    </location>
    <ligand>
        <name>ATP</name>
        <dbReference type="ChEBI" id="CHEBI:30616"/>
    </ligand>
</feature>
<keyword id="KW-0067">ATP-binding</keyword>
<keyword id="KW-0997">Cell inner membrane</keyword>
<keyword id="KW-1003">Cell membrane</keyword>
<keyword id="KW-0472">Membrane</keyword>
<keyword id="KW-0547">Nucleotide-binding</keyword>
<keyword id="KW-0677">Repeat</keyword>
<keyword id="KW-0762">Sugar transport</keyword>
<keyword id="KW-1278">Translocase</keyword>
<keyword id="KW-0813">Transport</keyword>
<protein>
    <recommendedName>
        <fullName evidence="1">Xylose import ATP-binding protein XylG</fullName>
        <ecNumber evidence="1">7.5.2.10</ecNumber>
    </recommendedName>
</protein>
<dbReference type="EC" id="7.5.2.10" evidence="1"/>
<dbReference type="EMBL" id="CP000442">
    <property type="protein sequence ID" value="ABI91879.1"/>
    <property type="molecule type" value="Genomic_DNA"/>
</dbReference>
<dbReference type="RefSeq" id="WP_011661207.1">
    <property type="nucleotide sequence ID" value="NC_008392.1"/>
</dbReference>
<dbReference type="SMR" id="Q0B1U4"/>
<dbReference type="GeneID" id="93088657"/>
<dbReference type="KEGG" id="bam:Bamb_6335"/>
<dbReference type="PATRIC" id="fig|339670.21.peg.6215"/>
<dbReference type="eggNOG" id="COG1129">
    <property type="taxonomic scope" value="Bacteria"/>
</dbReference>
<dbReference type="Proteomes" id="UP000000662">
    <property type="component" value="Chromosome 3"/>
</dbReference>
<dbReference type="GO" id="GO:0005886">
    <property type="term" value="C:plasma membrane"/>
    <property type="evidence" value="ECO:0007669"/>
    <property type="project" value="UniProtKB-SubCell"/>
</dbReference>
<dbReference type="GO" id="GO:0015614">
    <property type="term" value="F:ABC-type D-xylose transporter activity"/>
    <property type="evidence" value="ECO:0007669"/>
    <property type="project" value="UniProtKB-EC"/>
</dbReference>
<dbReference type="GO" id="GO:0005524">
    <property type="term" value="F:ATP binding"/>
    <property type="evidence" value="ECO:0007669"/>
    <property type="project" value="UniProtKB-KW"/>
</dbReference>
<dbReference type="GO" id="GO:0016887">
    <property type="term" value="F:ATP hydrolysis activity"/>
    <property type="evidence" value="ECO:0007669"/>
    <property type="project" value="InterPro"/>
</dbReference>
<dbReference type="CDD" id="cd03216">
    <property type="entry name" value="ABC_Carb_Monos_I"/>
    <property type="match status" value="1"/>
</dbReference>
<dbReference type="CDD" id="cd03215">
    <property type="entry name" value="ABC_Carb_Monos_II"/>
    <property type="match status" value="1"/>
</dbReference>
<dbReference type="FunFam" id="3.40.50.300:FF:000127">
    <property type="entry name" value="Ribose import ATP-binding protein RbsA"/>
    <property type="match status" value="1"/>
</dbReference>
<dbReference type="Gene3D" id="3.40.50.300">
    <property type="entry name" value="P-loop containing nucleotide triphosphate hydrolases"/>
    <property type="match status" value="2"/>
</dbReference>
<dbReference type="InterPro" id="IPR003593">
    <property type="entry name" value="AAA+_ATPase"/>
</dbReference>
<dbReference type="InterPro" id="IPR050107">
    <property type="entry name" value="ABC_carbohydrate_import_ATPase"/>
</dbReference>
<dbReference type="InterPro" id="IPR003439">
    <property type="entry name" value="ABC_transporter-like_ATP-bd"/>
</dbReference>
<dbReference type="InterPro" id="IPR017871">
    <property type="entry name" value="ABC_transporter-like_CS"/>
</dbReference>
<dbReference type="InterPro" id="IPR013455">
    <property type="entry name" value="ABC_transptr_XylG"/>
</dbReference>
<dbReference type="InterPro" id="IPR027417">
    <property type="entry name" value="P-loop_NTPase"/>
</dbReference>
<dbReference type="NCBIfam" id="NF010069">
    <property type="entry name" value="PRK13549.1"/>
    <property type="match status" value="1"/>
</dbReference>
<dbReference type="NCBIfam" id="TIGR02633">
    <property type="entry name" value="xylG"/>
    <property type="match status" value="1"/>
</dbReference>
<dbReference type="PANTHER" id="PTHR43790">
    <property type="entry name" value="CARBOHYDRATE TRANSPORT ATP-BINDING PROTEIN MG119-RELATED"/>
    <property type="match status" value="1"/>
</dbReference>
<dbReference type="PANTHER" id="PTHR43790:SF1">
    <property type="entry name" value="XYLOSE IMPORT ATP-BINDING PROTEIN XYLG"/>
    <property type="match status" value="1"/>
</dbReference>
<dbReference type="Pfam" id="PF00005">
    <property type="entry name" value="ABC_tran"/>
    <property type="match status" value="2"/>
</dbReference>
<dbReference type="SMART" id="SM00382">
    <property type="entry name" value="AAA"/>
    <property type="match status" value="2"/>
</dbReference>
<dbReference type="SUPFAM" id="SSF52540">
    <property type="entry name" value="P-loop containing nucleoside triphosphate hydrolases"/>
    <property type="match status" value="2"/>
</dbReference>
<dbReference type="PROSITE" id="PS00211">
    <property type="entry name" value="ABC_TRANSPORTER_1"/>
    <property type="match status" value="1"/>
</dbReference>
<dbReference type="PROSITE" id="PS50893">
    <property type="entry name" value="ABC_TRANSPORTER_2"/>
    <property type="match status" value="2"/>
</dbReference>
<dbReference type="PROSITE" id="PS51280">
    <property type="entry name" value="XYLG"/>
    <property type="match status" value="1"/>
</dbReference>
<sequence length="519" mass="56061">MTEPLLTMRGIVKAFDGVKALDGIDLTVRPGECVGLCGENGAGKSTLMKVLSGVYPHGTWDGEIRWEGAPLVASGVRDTERAGIVIIHQELMLVPELSVAENIFLGNEITLPGGRMHYAEMVRRSEALLRDLRIDAINVAQPVMNYGGGHQQLIEIAKALNKRAKLLILDEPSSSLSAAETRILLDIVRDLKRRGVACVYISHKLDEVDAVCDTVTVIRDGRHVATEPMSTLTTDRIIAMMVGREIRNLYPREPHEIGDVVLEARNVTCHDVANPRRKRVDDVSFAVRRGEILGVAGLVGAGRTELMQAIFGAYPGASTASIRMNGRPLAIRAPADAIRAGIAMVPEDRKRHGIVPQLGVGHNITLSVLRRFATRGRIDAAAELDAIRTEMQRLSVRAAHPFLPIASLSGGNQQKAVLARMLLADPQVLILDEPTRGVDVGAKAEIYRLIFALAKRGVALIVVSSELPEVLGLADRVLVIGEGELRGDFVNDGLTQEQILGAALTPARRPAEPIAASNP</sequence>
<accession>Q0B1U4</accession>
<proteinExistence type="inferred from homology"/>
<gene>
    <name evidence="1" type="primary">xylG</name>
    <name type="ordered locus">Bamb_6335</name>
</gene>
<name>XYLG_BURCM</name>
<comment type="function">
    <text evidence="1">Part of the ABC transporter complex XylFGH involved in xylose import. Responsible for energy coupling to the transport system.</text>
</comment>
<comment type="catalytic activity">
    <reaction evidence="1">
        <text>D-xylose(out) + ATP + H2O = D-xylose(in) + ADP + phosphate + H(+)</text>
        <dbReference type="Rhea" id="RHEA:29899"/>
        <dbReference type="ChEBI" id="CHEBI:15377"/>
        <dbReference type="ChEBI" id="CHEBI:15378"/>
        <dbReference type="ChEBI" id="CHEBI:30616"/>
        <dbReference type="ChEBI" id="CHEBI:43474"/>
        <dbReference type="ChEBI" id="CHEBI:53455"/>
        <dbReference type="ChEBI" id="CHEBI:456216"/>
        <dbReference type="EC" id="7.5.2.10"/>
    </reaction>
</comment>
<comment type="subunit">
    <text evidence="1">The complex is composed of two ATP-binding proteins (XylG), two transmembrane proteins (XylH) and a solute-binding protein (XylF).</text>
</comment>
<comment type="subcellular location">
    <subcellularLocation>
        <location evidence="1">Cell inner membrane</location>
        <topology evidence="1">Peripheral membrane protein</topology>
    </subcellularLocation>
</comment>
<comment type="similarity">
    <text evidence="1">Belongs to the ABC transporter superfamily. Xylose importer (TC 3.A.1.2.4) family.</text>
</comment>
<reference key="1">
    <citation type="submission" date="2006-08" db="EMBL/GenBank/DDBJ databases">
        <title>Complete sequence of chromosome 3 of Burkholderia cepacia AMMD.</title>
        <authorList>
            <person name="Copeland A."/>
            <person name="Lucas S."/>
            <person name="Lapidus A."/>
            <person name="Barry K."/>
            <person name="Detter J.C."/>
            <person name="Glavina del Rio T."/>
            <person name="Hammon N."/>
            <person name="Israni S."/>
            <person name="Pitluck S."/>
            <person name="Bruce D."/>
            <person name="Chain P."/>
            <person name="Malfatti S."/>
            <person name="Shin M."/>
            <person name="Vergez L."/>
            <person name="Schmutz J."/>
            <person name="Larimer F."/>
            <person name="Land M."/>
            <person name="Hauser L."/>
            <person name="Kyrpides N."/>
            <person name="Kim E."/>
            <person name="Parke J."/>
            <person name="Coenye T."/>
            <person name="Konstantinidis K."/>
            <person name="Ramette A."/>
            <person name="Tiedje J."/>
            <person name="Richardson P."/>
        </authorList>
    </citation>
    <scope>NUCLEOTIDE SEQUENCE [LARGE SCALE GENOMIC DNA]</scope>
    <source>
        <strain>ATCC BAA-244 / DSM 16087 / CCUG 44356 / LMG 19182 / AMMD</strain>
    </source>
</reference>